<evidence type="ECO:0000255" key="1">
    <source>
        <dbReference type="HAMAP-Rule" id="MF_00222"/>
    </source>
</evidence>
<protein>
    <recommendedName>
        <fullName evidence="1">Shikimate dehydrogenase (NADP(+))</fullName>
        <shortName evidence="1">SDH</shortName>
        <ecNumber evidence="1">1.1.1.25</ecNumber>
    </recommendedName>
</protein>
<dbReference type="EC" id="1.1.1.25" evidence="1"/>
<dbReference type="EMBL" id="CP000679">
    <property type="protein sequence ID" value="ABP66669.1"/>
    <property type="molecule type" value="Genomic_DNA"/>
</dbReference>
<dbReference type="RefSeq" id="WP_011916616.1">
    <property type="nucleotide sequence ID" value="NC_009437.1"/>
</dbReference>
<dbReference type="SMR" id="A4XID4"/>
<dbReference type="STRING" id="351627.Csac_1055"/>
<dbReference type="KEGG" id="csc:Csac_1055"/>
<dbReference type="eggNOG" id="COG0169">
    <property type="taxonomic scope" value="Bacteria"/>
</dbReference>
<dbReference type="HOGENOM" id="CLU_044063_4_1_9"/>
<dbReference type="OrthoDB" id="9792692at2"/>
<dbReference type="UniPathway" id="UPA00053">
    <property type="reaction ID" value="UER00087"/>
</dbReference>
<dbReference type="Proteomes" id="UP000000256">
    <property type="component" value="Chromosome"/>
</dbReference>
<dbReference type="GO" id="GO:0005829">
    <property type="term" value="C:cytosol"/>
    <property type="evidence" value="ECO:0007669"/>
    <property type="project" value="TreeGrafter"/>
</dbReference>
<dbReference type="GO" id="GO:0050661">
    <property type="term" value="F:NADP binding"/>
    <property type="evidence" value="ECO:0007669"/>
    <property type="project" value="InterPro"/>
</dbReference>
<dbReference type="GO" id="GO:0004764">
    <property type="term" value="F:shikimate 3-dehydrogenase (NADP+) activity"/>
    <property type="evidence" value="ECO:0007669"/>
    <property type="project" value="UniProtKB-UniRule"/>
</dbReference>
<dbReference type="GO" id="GO:0008652">
    <property type="term" value="P:amino acid biosynthetic process"/>
    <property type="evidence" value="ECO:0007669"/>
    <property type="project" value="UniProtKB-KW"/>
</dbReference>
<dbReference type="GO" id="GO:0009073">
    <property type="term" value="P:aromatic amino acid family biosynthetic process"/>
    <property type="evidence" value="ECO:0007669"/>
    <property type="project" value="UniProtKB-KW"/>
</dbReference>
<dbReference type="GO" id="GO:0009423">
    <property type="term" value="P:chorismate biosynthetic process"/>
    <property type="evidence" value="ECO:0007669"/>
    <property type="project" value="UniProtKB-UniRule"/>
</dbReference>
<dbReference type="GO" id="GO:0019632">
    <property type="term" value="P:shikimate metabolic process"/>
    <property type="evidence" value="ECO:0007669"/>
    <property type="project" value="InterPro"/>
</dbReference>
<dbReference type="CDD" id="cd01065">
    <property type="entry name" value="NAD_bind_Shikimate_DH"/>
    <property type="match status" value="1"/>
</dbReference>
<dbReference type="Gene3D" id="3.40.50.10860">
    <property type="entry name" value="Leucine Dehydrogenase, chain A, domain 1"/>
    <property type="match status" value="1"/>
</dbReference>
<dbReference type="Gene3D" id="3.40.50.720">
    <property type="entry name" value="NAD(P)-binding Rossmann-like Domain"/>
    <property type="match status" value="1"/>
</dbReference>
<dbReference type="HAMAP" id="MF_00222">
    <property type="entry name" value="Shikimate_DH_AroE"/>
    <property type="match status" value="1"/>
</dbReference>
<dbReference type="InterPro" id="IPR046346">
    <property type="entry name" value="Aminoacid_DH-like_N_sf"/>
</dbReference>
<dbReference type="InterPro" id="IPR036291">
    <property type="entry name" value="NAD(P)-bd_dom_sf"/>
</dbReference>
<dbReference type="InterPro" id="IPR011342">
    <property type="entry name" value="Shikimate_DH"/>
</dbReference>
<dbReference type="InterPro" id="IPR013708">
    <property type="entry name" value="Shikimate_DH-bd_N"/>
</dbReference>
<dbReference type="InterPro" id="IPR022893">
    <property type="entry name" value="Shikimate_DH_fam"/>
</dbReference>
<dbReference type="InterPro" id="IPR006151">
    <property type="entry name" value="Shikm_DH/Glu-tRNA_Rdtase"/>
</dbReference>
<dbReference type="NCBIfam" id="TIGR00507">
    <property type="entry name" value="aroE"/>
    <property type="match status" value="1"/>
</dbReference>
<dbReference type="PANTHER" id="PTHR21089:SF1">
    <property type="entry name" value="BIFUNCTIONAL 3-DEHYDROQUINATE DEHYDRATASE_SHIKIMATE DEHYDROGENASE, CHLOROPLASTIC"/>
    <property type="match status" value="1"/>
</dbReference>
<dbReference type="PANTHER" id="PTHR21089">
    <property type="entry name" value="SHIKIMATE DEHYDROGENASE"/>
    <property type="match status" value="1"/>
</dbReference>
<dbReference type="Pfam" id="PF01488">
    <property type="entry name" value="Shikimate_DH"/>
    <property type="match status" value="1"/>
</dbReference>
<dbReference type="Pfam" id="PF08501">
    <property type="entry name" value="Shikimate_dh_N"/>
    <property type="match status" value="1"/>
</dbReference>
<dbReference type="SUPFAM" id="SSF53223">
    <property type="entry name" value="Aminoacid dehydrogenase-like, N-terminal domain"/>
    <property type="match status" value="1"/>
</dbReference>
<dbReference type="SUPFAM" id="SSF51735">
    <property type="entry name" value="NAD(P)-binding Rossmann-fold domains"/>
    <property type="match status" value="1"/>
</dbReference>
<feature type="chain" id="PRO_1000021269" description="Shikimate dehydrogenase (NADP(+))">
    <location>
        <begin position="1"/>
        <end position="279"/>
    </location>
</feature>
<feature type="active site" description="Proton acceptor" evidence="1">
    <location>
        <position position="67"/>
    </location>
</feature>
<feature type="binding site" evidence="1">
    <location>
        <begin position="14"/>
        <end position="16"/>
    </location>
    <ligand>
        <name>shikimate</name>
        <dbReference type="ChEBI" id="CHEBI:36208"/>
    </ligand>
</feature>
<feature type="binding site" evidence="1">
    <location>
        <position position="63"/>
    </location>
    <ligand>
        <name>shikimate</name>
        <dbReference type="ChEBI" id="CHEBI:36208"/>
    </ligand>
</feature>
<feature type="binding site" evidence="1">
    <location>
        <position position="79"/>
    </location>
    <ligand>
        <name>NADP(+)</name>
        <dbReference type="ChEBI" id="CHEBI:58349"/>
    </ligand>
</feature>
<feature type="binding site" evidence="1">
    <location>
        <position position="88"/>
    </location>
    <ligand>
        <name>shikimate</name>
        <dbReference type="ChEBI" id="CHEBI:36208"/>
    </ligand>
</feature>
<feature type="binding site" evidence="1">
    <location>
        <position position="103"/>
    </location>
    <ligand>
        <name>shikimate</name>
        <dbReference type="ChEBI" id="CHEBI:36208"/>
    </ligand>
</feature>
<feature type="binding site" evidence="1">
    <location>
        <begin position="127"/>
        <end position="131"/>
    </location>
    <ligand>
        <name>NADP(+)</name>
        <dbReference type="ChEBI" id="CHEBI:58349"/>
    </ligand>
</feature>
<feature type="binding site" evidence="1">
    <location>
        <begin position="151"/>
        <end position="156"/>
    </location>
    <ligand>
        <name>NADP(+)</name>
        <dbReference type="ChEBI" id="CHEBI:58349"/>
    </ligand>
</feature>
<feature type="binding site" evidence="1">
    <location>
        <position position="219"/>
    </location>
    <ligand>
        <name>NADP(+)</name>
        <dbReference type="ChEBI" id="CHEBI:58349"/>
    </ligand>
</feature>
<feature type="binding site" evidence="1">
    <location>
        <position position="221"/>
    </location>
    <ligand>
        <name>shikimate</name>
        <dbReference type="ChEBI" id="CHEBI:36208"/>
    </ligand>
</feature>
<feature type="binding site" evidence="1">
    <location>
        <position position="242"/>
    </location>
    <ligand>
        <name>NADP(+)</name>
        <dbReference type="ChEBI" id="CHEBI:58349"/>
    </ligand>
</feature>
<reference key="1">
    <citation type="submission" date="2007-04" db="EMBL/GenBank/DDBJ databases">
        <title>Genome sequence of the thermophilic hydrogen-producing bacterium Caldicellulosiruptor saccharolyticus DSM 8903.</title>
        <authorList>
            <person name="Copeland A."/>
            <person name="Lucas S."/>
            <person name="Lapidus A."/>
            <person name="Barry K."/>
            <person name="Detter J.C."/>
            <person name="Glavina del Rio T."/>
            <person name="Hammon N."/>
            <person name="Israni S."/>
            <person name="Dalin E."/>
            <person name="Tice H."/>
            <person name="Pitluck S."/>
            <person name="Kiss H."/>
            <person name="Brettin T."/>
            <person name="Bruce D."/>
            <person name="Han C."/>
            <person name="Schmutz J."/>
            <person name="Larimer F."/>
            <person name="Land M."/>
            <person name="Hauser L."/>
            <person name="Kyrpides N."/>
            <person name="Lykidis A."/>
            <person name="van de Werken H.J.G."/>
            <person name="Verhaart M.R.A."/>
            <person name="VanFossen A.L."/>
            <person name="Lewis D.L."/>
            <person name="Nichols J.D."/>
            <person name="Goorissen H.P."/>
            <person name="van Niel E.W.J."/>
            <person name="Stams F.J.M."/>
            <person name="Willquist K.U."/>
            <person name="Ward D.E."/>
            <person name="van der Oost J."/>
            <person name="Kelly R.M."/>
            <person name="Kengen S.M.W."/>
            <person name="Richardson P."/>
        </authorList>
    </citation>
    <scope>NUCLEOTIDE SEQUENCE [LARGE SCALE GENOMIC DNA]</scope>
    <source>
        <strain>ATCC 43494 / DSM 8903 / Tp8T 6331</strain>
    </source>
</reference>
<comment type="function">
    <text evidence="1">Involved in the biosynthesis of the chorismate, which leads to the biosynthesis of aromatic amino acids. Catalyzes the reversible NADPH linked reduction of 3-dehydroshikimate (DHSA) to yield shikimate (SA).</text>
</comment>
<comment type="catalytic activity">
    <reaction evidence="1">
        <text>shikimate + NADP(+) = 3-dehydroshikimate + NADPH + H(+)</text>
        <dbReference type="Rhea" id="RHEA:17737"/>
        <dbReference type="ChEBI" id="CHEBI:15378"/>
        <dbReference type="ChEBI" id="CHEBI:16630"/>
        <dbReference type="ChEBI" id="CHEBI:36208"/>
        <dbReference type="ChEBI" id="CHEBI:57783"/>
        <dbReference type="ChEBI" id="CHEBI:58349"/>
        <dbReference type="EC" id="1.1.1.25"/>
    </reaction>
</comment>
<comment type="pathway">
    <text evidence="1">Metabolic intermediate biosynthesis; chorismate biosynthesis; chorismate from D-erythrose 4-phosphate and phosphoenolpyruvate: step 4/7.</text>
</comment>
<comment type="subunit">
    <text evidence="1">Homodimer.</text>
</comment>
<comment type="similarity">
    <text evidence="1">Belongs to the shikimate dehydrogenase family.</text>
</comment>
<gene>
    <name evidence="1" type="primary">aroE</name>
    <name type="ordered locus">Csac_1055</name>
</gene>
<organism>
    <name type="scientific">Caldicellulosiruptor saccharolyticus (strain ATCC 43494 / DSM 8903 / Tp8T 6331)</name>
    <dbReference type="NCBI Taxonomy" id="351627"/>
    <lineage>
        <taxon>Bacteria</taxon>
        <taxon>Bacillati</taxon>
        <taxon>Bacillota</taxon>
        <taxon>Bacillota incertae sedis</taxon>
        <taxon>Caldicellulosiruptorales</taxon>
        <taxon>Caldicellulosiruptoraceae</taxon>
        <taxon>Caldicellulosiruptor</taxon>
    </lineage>
</organism>
<name>AROE_CALS8</name>
<proteinExistence type="inferred from homology"/>
<sequence length="279" mass="31990">MKKLYLIGKSLKHSISPLIHNKILSNFGIDAVYSNVELPDFEKLKEFVEMVKKDGDVVGFNITIPYKEDILEFCDEVSEDVRIIQAANTVKKEGEKLVAYNTDWLGFKRSLEEVGISVKDKRILILGAGGAAKACIYGLYRMGVKEVFVANRTYEKAESLKEVFQDILKILPVEWLRRYEFKYDIIINTTSVGMFPNIESSPFDFENYVAGIPVFVYDMIYNPPKTTFLEEAEKKGSKTENGLKMLVYQAVEAEKIWFDIVNLSQSFLLEILKECEKKI</sequence>
<accession>A4XID4</accession>
<keyword id="KW-0028">Amino-acid biosynthesis</keyword>
<keyword id="KW-0057">Aromatic amino acid biosynthesis</keyword>
<keyword id="KW-0521">NADP</keyword>
<keyword id="KW-0560">Oxidoreductase</keyword>